<reference key="1">
    <citation type="journal article" date="2001" name="Genome Res.">
        <title>The complete genome sequence of the lactic acid bacterium Lactococcus lactis ssp. lactis IL1403.</title>
        <authorList>
            <person name="Bolotin A."/>
            <person name="Wincker P."/>
            <person name="Mauger S."/>
            <person name="Jaillon O."/>
            <person name="Malarme K."/>
            <person name="Weissenbach J."/>
            <person name="Ehrlich S.D."/>
            <person name="Sorokin A."/>
        </authorList>
    </citation>
    <scope>NUCLEOTIDE SEQUENCE [LARGE SCALE GENOMIC DNA]</scope>
    <source>
        <strain>IL1403</strain>
    </source>
</reference>
<protein>
    <recommendedName>
        <fullName evidence="1">Ribosome-recycling factor</fullName>
        <shortName evidence="1">RRF</shortName>
    </recommendedName>
    <alternativeName>
        <fullName evidence="1">Ribosome-releasing factor</fullName>
    </alternativeName>
</protein>
<name>RRF_LACLA</name>
<evidence type="ECO:0000255" key="1">
    <source>
        <dbReference type="HAMAP-Rule" id="MF_00040"/>
    </source>
</evidence>
<gene>
    <name evidence="1" type="primary">frr</name>
    <name type="ordered locus">LL2009</name>
    <name type="ORF">L0367</name>
</gene>
<organism>
    <name type="scientific">Lactococcus lactis subsp. lactis (strain IL1403)</name>
    <name type="common">Streptococcus lactis</name>
    <dbReference type="NCBI Taxonomy" id="272623"/>
    <lineage>
        <taxon>Bacteria</taxon>
        <taxon>Bacillati</taxon>
        <taxon>Bacillota</taxon>
        <taxon>Bacilli</taxon>
        <taxon>Lactobacillales</taxon>
        <taxon>Streptococcaceae</taxon>
        <taxon>Lactococcus</taxon>
    </lineage>
</organism>
<dbReference type="EMBL" id="AE005176">
    <property type="protein sequence ID" value="AAK06107.1"/>
    <property type="molecule type" value="Genomic_DNA"/>
</dbReference>
<dbReference type="PIR" id="A86876">
    <property type="entry name" value="A86876"/>
</dbReference>
<dbReference type="RefSeq" id="NP_268166.1">
    <property type="nucleotide sequence ID" value="NC_002662.1"/>
</dbReference>
<dbReference type="RefSeq" id="WP_004254618.1">
    <property type="nucleotide sequence ID" value="NC_002662.1"/>
</dbReference>
<dbReference type="SMR" id="Q9CE39"/>
<dbReference type="PaxDb" id="272623-L0367"/>
<dbReference type="EnsemblBacteria" id="AAK06107">
    <property type="protein sequence ID" value="AAK06107"/>
    <property type="gene ID" value="L0367"/>
</dbReference>
<dbReference type="GeneID" id="89634364"/>
<dbReference type="KEGG" id="lla:L0367"/>
<dbReference type="PATRIC" id="fig|272623.7.peg.2164"/>
<dbReference type="eggNOG" id="COG0233">
    <property type="taxonomic scope" value="Bacteria"/>
</dbReference>
<dbReference type="HOGENOM" id="CLU_073981_2_0_9"/>
<dbReference type="OrthoDB" id="9804006at2"/>
<dbReference type="Proteomes" id="UP000002196">
    <property type="component" value="Chromosome"/>
</dbReference>
<dbReference type="GO" id="GO:0005737">
    <property type="term" value="C:cytoplasm"/>
    <property type="evidence" value="ECO:0007669"/>
    <property type="project" value="UniProtKB-SubCell"/>
</dbReference>
<dbReference type="GO" id="GO:0043023">
    <property type="term" value="F:ribosomal large subunit binding"/>
    <property type="evidence" value="ECO:0007669"/>
    <property type="project" value="TreeGrafter"/>
</dbReference>
<dbReference type="GO" id="GO:0006415">
    <property type="term" value="P:translational termination"/>
    <property type="evidence" value="ECO:0007669"/>
    <property type="project" value="UniProtKB-UniRule"/>
</dbReference>
<dbReference type="CDD" id="cd00520">
    <property type="entry name" value="RRF"/>
    <property type="match status" value="1"/>
</dbReference>
<dbReference type="FunFam" id="1.10.132.20:FF:000001">
    <property type="entry name" value="Ribosome-recycling factor"/>
    <property type="match status" value="1"/>
</dbReference>
<dbReference type="FunFam" id="3.30.1360.40:FF:000001">
    <property type="entry name" value="Ribosome-recycling factor"/>
    <property type="match status" value="1"/>
</dbReference>
<dbReference type="Gene3D" id="3.30.1360.40">
    <property type="match status" value="1"/>
</dbReference>
<dbReference type="Gene3D" id="1.10.132.20">
    <property type="entry name" value="Ribosome-recycling factor"/>
    <property type="match status" value="1"/>
</dbReference>
<dbReference type="HAMAP" id="MF_00040">
    <property type="entry name" value="RRF"/>
    <property type="match status" value="1"/>
</dbReference>
<dbReference type="InterPro" id="IPR002661">
    <property type="entry name" value="Ribosome_recyc_fac"/>
</dbReference>
<dbReference type="InterPro" id="IPR023584">
    <property type="entry name" value="Ribosome_recyc_fac_dom"/>
</dbReference>
<dbReference type="InterPro" id="IPR036191">
    <property type="entry name" value="RRF_sf"/>
</dbReference>
<dbReference type="NCBIfam" id="TIGR00496">
    <property type="entry name" value="frr"/>
    <property type="match status" value="1"/>
</dbReference>
<dbReference type="PANTHER" id="PTHR20982:SF3">
    <property type="entry name" value="MITOCHONDRIAL RIBOSOME RECYCLING FACTOR PSEUDO 1"/>
    <property type="match status" value="1"/>
</dbReference>
<dbReference type="PANTHER" id="PTHR20982">
    <property type="entry name" value="RIBOSOME RECYCLING FACTOR"/>
    <property type="match status" value="1"/>
</dbReference>
<dbReference type="Pfam" id="PF01765">
    <property type="entry name" value="RRF"/>
    <property type="match status" value="1"/>
</dbReference>
<dbReference type="SUPFAM" id="SSF55194">
    <property type="entry name" value="Ribosome recycling factor, RRF"/>
    <property type="match status" value="1"/>
</dbReference>
<comment type="function">
    <text evidence="1">Responsible for the release of ribosomes from messenger RNA at the termination of protein biosynthesis. May increase the efficiency of translation by recycling ribosomes from one round of translation to another.</text>
</comment>
<comment type="subcellular location">
    <subcellularLocation>
        <location evidence="1">Cytoplasm</location>
    </subcellularLocation>
</comment>
<comment type="similarity">
    <text evidence="1">Belongs to the RRF family.</text>
</comment>
<keyword id="KW-0963">Cytoplasm</keyword>
<keyword id="KW-0648">Protein biosynthesis</keyword>
<keyword id="KW-1185">Reference proteome</keyword>
<accession>Q9CE39</accession>
<feature type="chain" id="PRO_0000167475" description="Ribosome-recycling factor">
    <location>
        <begin position="1"/>
        <end position="185"/>
    </location>
</feature>
<proteinExistence type="inferred from homology"/>
<sequence>MANEIVTTAQDRMKQSLGSLQRDLGHIRAGRANASLLDRVQVVYYGAPTPLNQLASITIPEARVLMVTPFDKSILKDIEKALYESDLGITPANDGSVIRLVIPMLTEERRRELVKEMGKYIESAKVAIRNIRRDAMDTAKKSEKAKEITEDDLKDLENNIQKVTDDAVKEADRLASIKEKELLDI</sequence>